<organismHost>
    <name type="scientific">Aves</name>
    <dbReference type="NCBI Taxonomy" id="8782"/>
</organismHost>
<organismHost>
    <name type="scientific">Cetacea</name>
    <name type="common">whales</name>
    <dbReference type="NCBI Taxonomy" id="9721"/>
</organismHost>
<organismHost>
    <name type="scientific">Homo sapiens</name>
    <name type="common">Human</name>
    <dbReference type="NCBI Taxonomy" id="9606"/>
</organismHost>
<organismHost>
    <name type="scientific">Phocidae</name>
    <name type="common">true seals</name>
    <dbReference type="NCBI Taxonomy" id="9709"/>
</organismHost>
<organismHost>
    <name type="scientific">Sus scrofa</name>
    <name type="common">Pig</name>
    <dbReference type="NCBI Taxonomy" id="9823"/>
</organismHost>
<name>NRAM_I71A1</name>
<feature type="chain" id="PRO_0000078707" description="Neuraminidase">
    <location>
        <begin position="1"/>
        <end position="469"/>
    </location>
</feature>
<feature type="topological domain" description="Intravirion" evidence="1">
    <location>
        <begin position="1"/>
        <end position="9"/>
    </location>
</feature>
<feature type="transmembrane region" description="Helical" evidence="1">
    <location>
        <begin position="10"/>
        <end position="30"/>
    </location>
</feature>
<feature type="topological domain" description="Virion surface" evidence="1">
    <location>
        <begin position="31"/>
        <end position="469"/>
    </location>
</feature>
<feature type="region of interest" description="Involved in apical transport and lipid raft association" evidence="1">
    <location>
        <begin position="11"/>
        <end position="33"/>
    </location>
</feature>
<feature type="region of interest" description="Hypervariable stalk region" evidence="1">
    <location>
        <begin position="36"/>
        <end position="88"/>
    </location>
</feature>
<feature type="region of interest" description="Head of neuraminidase" evidence="1">
    <location>
        <begin position="91"/>
        <end position="469"/>
    </location>
</feature>
<feature type="region of interest" description="Disordered" evidence="2">
    <location>
        <begin position="326"/>
        <end position="350"/>
    </location>
</feature>
<feature type="compositionally biased region" description="Low complexity" evidence="2">
    <location>
        <begin position="331"/>
        <end position="343"/>
    </location>
</feature>
<feature type="active site" description="Proton donor/acceptor" evidence="1">
    <location>
        <position position="151"/>
    </location>
</feature>
<feature type="active site" description="Nucleophile" evidence="1">
    <location>
        <position position="406"/>
    </location>
</feature>
<feature type="binding site" evidence="1">
    <location>
        <position position="118"/>
    </location>
    <ligand>
        <name>substrate</name>
    </ligand>
</feature>
<feature type="binding site" evidence="1">
    <location>
        <position position="152"/>
    </location>
    <ligand>
        <name>substrate</name>
    </ligand>
</feature>
<feature type="binding site" evidence="1">
    <location>
        <begin position="276"/>
        <end position="277"/>
    </location>
    <ligand>
        <name>substrate</name>
    </ligand>
</feature>
<feature type="binding site" evidence="1">
    <location>
        <position position="292"/>
    </location>
    <ligand>
        <name>substrate</name>
    </ligand>
</feature>
<feature type="binding site" evidence="1">
    <location>
        <position position="293"/>
    </location>
    <ligand>
        <name>Ca(2+)</name>
        <dbReference type="ChEBI" id="CHEBI:29108"/>
    </ligand>
</feature>
<feature type="binding site" evidence="1">
    <location>
        <position position="297"/>
    </location>
    <ligand>
        <name>Ca(2+)</name>
        <dbReference type="ChEBI" id="CHEBI:29108"/>
    </ligand>
</feature>
<feature type="binding site" evidence="1">
    <location>
        <position position="324"/>
    </location>
    <ligand>
        <name>Ca(2+)</name>
        <dbReference type="ChEBI" id="CHEBI:29108"/>
    </ligand>
</feature>
<feature type="binding site" evidence="1">
    <location>
        <position position="371"/>
    </location>
    <ligand>
        <name>substrate</name>
    </ligand>
</feature>
<feature type="glycosylation site" description="N-linked (GlcNAc...) asparagine; by host" evidence="1">
    <location>
        <position position="61"/>
    </location>
</feature>
<feature type="glycosylation site" description="N-linked (GlcNAc...) asparagine; by host" evidence="1">
    <location>
        <position position="70"/>
    </location>
</feature>
<feature type="glycosylation site" description="N-linked (GlcNAc...) asparagine; by host" evidence="1">
    <location>
        <position position="86"/>
    </location>
</feature>
<feature type="glycosylation site" description="N-linked (GlcNAc...) asparagine; by host" evidence="1">
    <location>
        <position position="146"/>
    </location>
</feature>
<feature type="glycosylation site" description="N-linked (GlcNAc...) asparagine; by host" evidence="1">
    <location>
        <position position="200"/>
    </location>
</feature>
<feature type="glycosylation site" description="N-linked (GlcNAc...) asparagine; by host" evidence="1">
    <location>
        <position position="234"/>
    </location>
</feature>
<feature type="glycosylation site" description="N-linked (GlcNAc...) asparagine; by host" evidence="1">
    <location>
        <position position="402"/>
    </location>
</feature>
<feature type="disulfide bond" evidence="1">
    <location>
        <begin position="92"/>
        <end position="417"/>
    </location>
</feature>
<feature type="disulfide bond" evidence="1">
    <location>
        <begin position="124"/>
        <end position="129"/>
    </location>
</feature>
<feature type="disulfide bond" evidence="1">
    <location>
        <begin position="183"/>
        <end position="230"/>
    </location>
</feature>
<feature type="disulfide bond" evidence="1">
    <location>
        <begin position="232"/>
        <end position="237"/>
    </location>
</feature>
<feature type="disulfide bond" evidence="1">
    <location>
        <begin position="278"/>
        <end position="291"/>
    </location>
</feature>
<feature type="disulfide bond" evidence="1">
    <location>
        <begin position="280"/>
        <end position="289"/>
    </location>
</feature>
<feature type="disulfide bond" evidence="1">
    <location>
        <begin position="318"/>
        <end position="337"/>
    </location>
</feature>
<feature type="disulfide bond" evidence="1">
    <location>
        <begin position="421"/>
        <end position="447"/>
    </location>
</feature>
<reference key="1">
    <citation type="journal article" date="2003" name="FEBS Lett.">
        <title>A molecular mechanism for the low-pH stability of sialidase activity of influenza A virus N2 neuraminidases.</title>
        <authorList>
            <person name="Takahashi T."/>
            <person name="Suzuki T."/>
            <person name="Hidari K.I.-P.J."/>
            <person name="Miyamoto D."/>
            <person name="Suzuki Y."/>
        </authorList>
    </citation>
    <scope>NUCLEOTIDE SEQUENCE [GENOMIC RNA]</scope>
</reference>
<reference key="2">
    <citation type="submission" date="2005-08" db="EMBL/GenBank/DDBJ databases">
        <title>The NIAID influenza genome sequencing project.</title>
        <authorList>
            <person name="Ghedin E."/>
            <person name="Spiro D."/>
            <person name="Miller N."/>
            <person name="Zaborsky J."/>
            <person name="Feldblyum T."/>
            <person name="Subbu V."/>
            <person name="Shumway M."/>
            <person name="Sparenborg J."/>
            <person name="Groveman L."/>
            <person name="Halpin R."/>
            <person name="Sitz J."/>
            <person name="Koo H."/>
            <person name="Salzberg S.L."/>
            <person name="Webster R.G."/>
            <person name="Hoffmann E."/>
            <person name="Krauss S."/>
            <person name="Naeve C."/>
            <person name="Bao Y."/>
            <person name="Bolotov P."/>
            <person name="Dernovoy D."/>
            <person name="Kiryutin B."/>
            <person name="Lipman D.J."/>
            <person name="Tatusova T."/>
        </authorList>
    </citation>
    <scope>NUCLEOTIDE SEQUENCE [GENOMIC RNA]</scope>
</reference>
<reference key="3">
    <citation type="journal article" date="1982" name="Biochemistry">
        <title>Variation in the membrane-insertion and 'stalk' sequences in eight subtypes of influenza type A virus neuraminidase.</title>
        <authorList>
            <person name="Blok J."/>
            <person name="Air G.M."/>
        </authorList>
    </citation>
    <scope>NUCLEOTIDE SEQUENCE [GENOMIC RNA] OF 1-89</scope>
    <source>
        <strain>A/Memphis/1/71H-A/Bellamy/42N</strain>
    </source>
</reference>
<reference key="4">
    <citation type="journal article" date="1982" name="Virology">
        <title>Sequence variation at the 3' end of the neuraminidase gene from 39 influenza type A viruses.</title>
        <authorList>
            <person name="Blok J."/>
            <person name="Air G.M."/>
        </authorList>
    </citation>
    <scope>NUCLEOTIDE SEQUENCE [GENOMIC RNA] OF 1-89</scope>
</reference>
<reference key="5">
    <citation type="journal article" date="2004" name="Virus Res.">
        <title>Assembly and budding of influenza virus.</title>
        <authorList>
            <person name="Nayak D.P."/>
            <person name="Hui E.K."/>
            <person name="Barman S."/>
        </authorList>
    </citation>
    <scope>REVIEW</scope>
</reference>
<reference key="6">
    <citation type="journal article" date="2005" name="N. Engl. J. Med.">
        <title>Neuraminidase inhibitors for influenza.</title>
        <authorList>
            <person name="Moscona A."/>
        </authorList>
    </citation>
    <scope>REVIEW</scope>
</reference>
<reference key="7">
    <citation type="journal article" date="2005" name="Biol. Pharm. Bull.">
        <title>Sialobiology of influenza: molecular mechanism of host range variation of influenza viruses.</title>
        <authorList>
            <person name="Suzuki Y."/>
        </authorList>
    </citation>
    <scope>REVIEW</scope>
</reference>
<comment type="function">
    <text evidence="1">Catalyzes the removal of terminal sialic acid residues from viral and cellular glycoconjugates. Cleaves off the terminal sialic acids on the glycosylated HA during virus budding to facilitate virus release. Additionally helps virus spread through the circulation by further removing sialic acids from the cell surface. These cleavages prevent self-aggregation and ensure the efficient spread of the progeny virus from cell to cell. Otherwise, infection would be limited to one round of replication. Described as a receptor-destroying enzyme because it cleaves a terminal sialic acid from the cellular receptors. May facilitate viral invasion of the upper airways by cleaving the sialic acid moieties on the mucin of the airway epithelial cells. Likely to plays a role in the budding process through its association with lipid rafts during intracellular transport. May additionally display a raft-association independent effect on budding. Plays a role in the determination of host range restriction on replication and virulence. Sialidase activity in late endosome/lysosome traffic seems to enhance virus replication.</text>
</comment>
<comment type="catalytic activity">
    <reaction evidence="1">
        <text>Hydrolysis of alpha-(2-&gt;3)-, alpha-(2-&gt;6)-, alpha-(2-&gt;8)- glycosidic linkages of terminal sialic acid residues in oligosaccharides, glycoproteins, glycolipids, colominic acid and synthetic substrates.</text>
        <dbReference type="EC" id="3.2.1.18"/>
    </reaction>
</comment>
<comment type="cofactor">
    <cofactor evidence="1">
        <name>Ca(2+)</name>
        <dbReference type="ChEBI" id="CHEBI:29108"/>
    </cofactor>
</comment>
<comment type="activity regulation">
    <text evidence="1">Inhibited by the neuraminidase inhibitors zanamivir (Relenza) and oseltamivir (Tamiflu). These drugs interfere with the release of progeny virus from infected cells and are effective against all influenza strains. Resistance to neuraminidase inhibitors is quite rare.</text>
</comment>
<comment type="subunit">
    <text evidence="1">Homotetramer.</text>
</comment>
<comment type="subcellular location">
    <subcellularLocation>
        <location evidence="1">Virion membrane</location>
    </subcellularLocation>
    <subcellularLocation>
        <location evidence="1">Host apical cell membrane</location>
        <topology evidence="1">Single-pass type II membrane protein</topology>
    </subcellularLocation>
    <text evidence="1">Preferentially accumulates at the apical plasma membrane in infected polarized epithelial cells, which is the virus assembly site. Uses lipid rafts for cell surface transport and apical sorting. In the virion, forms a mushroom-shaped spike on the surface of the membrane.</text>
</comment>
<comment type="domain">
    <text evidence="1">Intact N-terminus is essential for virion morphogenesis. Possesses two apical sorting signals, one in the ectodomain, which is likely to be a glycan, and the other in the transmembrane domain. The transmembrane domain also plays a role in lipid raft association.</text>
</comment>
<comment type="PTM">
    <text evidence="1">N-glycosylated.</text>
</comment>
<comment type="miscellaneous">
    <text>The influenza A genome consist of 8 RNA segments. Genetic variation of hemagglutinin and/or neuraminidase genes results in the emergence of new influenza strains. The mechanism of variation can be the result of point mutations or the result of genetic reassortment between segments of two different strains.</text>
</comment>
<comment type="similarity">
    <text evidence="1">Belongs to the glycosyl hydrolase 34 family.</text>
</comment>
<comment type="sequence caution">
    <conflict type="frameshift">
        <sequence resource="EMBL-CDS" id="AAA43437"/>
    </conflict>
</comment>
<comment type="sequence caution">
    <conflict type="frameshift">
        <sequence resource="EMBL-CDS" id="CAA24274"/>
    </conflict>
</comment>
<dbReference type="EC" id="3.2.1.18" evidence="1"/>
<dbReference type="EMBL" id="AB101675">
    <property type="protein sequence ID" value="BAC77664.1"/>
    <property type="molecule type" value="Genomic_RNA"/>
</dbReference>
<dbReference type="EMBL" id="CY002498">
    <property type="protein sequence ID" value="AAZ80010.1"/>
    <property type="molecule type" value="Genomic_RNA"/>
</dbReference>
<dbReference type="EMBL" id="V01090">
    <property type="protein sequence ID" value="CAA24274.1"/>
    <property type="status" value="ALT_FRAME"/>
    <property type="molecule type" value="Genomic_RNA"/>
</dbReference>
<dbReference type="EMBL" id="K01003">
    <property type="protein sequence ID" value="AAA43437.1"/>
    <property type="status" value="ALT_FRAME"/>
    <property type="molecule type" value="Genomic_RNA"/>
</dbReference>
<dbReference type="SMR" id="P03471"/>
<dbReference type="BindingDB" id="P03471"/>
<dbReference type="ChEMBL" id="CHEMBL6015"/>
<dbReference type="DrugCentral" id="P03471"/>
<dbReference type="CAZy" id="GH34">
    <property type="family name" value="Glycoside Hydrolase Family 34"/>
</dbReference>
<dbReference type="GlyCosmos" id="P03471">
    <property type="glycosylation" value="7 sites, No reported glycans"/>
</dbReference>
<dbReference type="SABIO-RK" id="P03471"/>
<dbReference type="PRO" id="PR:P03471"/>
<dbReference type="Proteomes" id="UP000154307">
    <property type="component" value="Genome"/>
</dbReference>
<dbReference type="GO" id="GO:0020002">
    <property type="term" value="C:host cell plasma membrane"/>
    <property type="evidence" value="ECO:0007669"/>
    <property type="project" value="UniProtKB-SubCell"/>
</dbReference>
<dbReference type="GO" id="GO:0016020">
    <property type="term" value="C:membrane"/>
    <property type="evidence" value="ECO:0007669"/>
    <property type="project" value="UniProtKB-UniRule"/>
</dbReference>
<dbReference type="GO" id="GO:0055036">
    <property type="term" value="C:virion membrane"/>
    <property type="evidence" value="ECO:0007669"/>
    <property type="project" value="UniProtKB-SubCell"/>
</dbReference>
<dbReference type="GO" id="GO:0004308">
    <property type="term" value="F:exo-alpha-sialidase activity"/>
    <property type="evidence" value="ECO:0007669"/>
    <property type="project" value="UniProtKB-UniRule"/>
</dbReference>
<dbReference type="GO" id="GO:0046872">
    <property type="term" value="F:metal ion binding"/>
    <property type="evidence" value="ECO:0007669"/>
    <property type="project" value="UniProtKB-UniRule"/>
</dbReference>
<dbReference type="GO" id="GO:0005975">
    <property type="term" value="P:carbohydrate metabolic process"/>
    <property type="evidence" value="ECO:0007669"/>
    <property type="project" value="InterPro"/>
</dbReference>
<dbReference type="GO" id="GO:0046761">
    <property type="term" value="P:viral budding from plasma membrane"/>
    <property type="evidence" value="ECO:0007669"/>
    <property type="project" value="UniProtKB-UniRule"/>
</dbReference>
<dbReference type="CDD" id="cd15483">
    <property type="entry name" value="Influenza_NA"/>
    <property type="match status" value="1"/>
</dbReference>
<dbReference type="Gene3D" id="2.120.10.10">
    <property type="match status" value="1"/>
</dbReference>
<dbReference type="HAMAP" id="MF_04071">
    <property type="entry name" value="INFV_NRAM"/>
    <property type="match status" value="1"/>
</dbReference>
<dbReference type="InterPro" id="IPR001860">
    <property type="entry name" value="Glyco_hydro_34"/>
</dbReference>
<dbReference type="InterPro" id="IPR033654">
    <property type="entry name" value="Sialidase_Influenza_A/B"/>
</dbReference>
<dbReference type="InterPro" id="IPR036278">
    <property type="entry name" value="Sialidase_sf"/>
</dbReference>
<dbReference type="Pfam" id="PF00064">
    <property type="entry name" value="Neur"/>
    <property type="match status" value="1"/>
</dbReference>
<dbReference type="SUPFAM" id="SSF50939">
    <property type="entry name" value="Sialidases"/>
    <property type="match status" value="1"/>
</dbReference>
<sequence length="469" mass="52103">MNPNQKIITIGSVSLTIATVCFLMQIAILVTTVTLHFKQYECDSPANNQVMPCEPIIIERNITEIVYLTNTTIEKEICPKLVEYRNWSKPQCKITGFAPFSKDNSIRLSAGGDIWVTREPYVSCDPGKCYQFALGQGTTLDNKHSNDTIHDRIPHRTLLMNELGVPFHLGTRQVCIAWSSSSCHDGKAWLHVCVTGDDKNATASFIYDGRLVDSIGSWSQNILRTQESECVCINGTCTVVMTDGSASGRADTRILFIEEGKIVHISPLSGSAQHVEECSCYPRYPGVRCICRDNWKGSNRPVVDINVKDYSIDSRYVCSGLVGDTPRNNDRSSNSNCRNPNNDKGNHGVKGWAFDDGNDVWMGRTISKDSRSGYETFKVIGGWSTPNSKSQINRQVIVDSDNRSGYSGIFSVEGKSCINRCFYVELIRGREQETRVWWTSNSIVVFCGTSGTYGTGSWPDGADINLMPI</sequence>
<protein>
    <recommendedName>
        <fullName evidence="1">Neuraminidase</fullName>
        <ecNumber evidence="1">3.2.1.18</ecNumber>
    </recommendedName>
</protein>
<gene>
    <name evidence="1" type="primary">NA</name>
</gene>
<accession>P03471</accession>
<accession>Q7T4V9</accession>
<evidence type="ECO:0000255" key="1">
    <source>
        <dbReference type="HAMAP-Rule" id="MF_04071"/>
    </source>
</evidence>
<evidence type="ECO:0000256" key="2">
    <source>
        <dbReference type="SAM" id="MobiDB-lite"/>
    </source>
</evidence>
<proteinExistence type="inferred from homology"/>
<organism>
    <name type="scientific">Influenza A virus (strain A/Memphis/1/1971 H3N2)</name>
    <dbReference type="NCBI Taxonomy" id="383586"/>
    <lineage>
        <taxon>Viruses</taxon>
        <taxon>Riboviria</taxon>
        <taxon>Orthornavirae</taxon>
        <taxon>Negarnaviricota</taxon>
        <taxon>Polyploviricotina</taxon>
        <taxon>Insthoviricetes</taxon>
        <taxon>Articulavirales</taxon>
        <taxon>Orthomyxoviridae</taxon>
        <taxon>Alphainfluenzavirus</taxon>
        <taxon>Alphainfluenzavirus influenzae</taxon>
        <taxon>Influenza A virus</taxon>
    </lineage>
</organism>
<keyword id="KW-0106">Calcium</keyword>
<keyword id="KW-1015">Disulfide bond</keyword>
<keyword id="KW-0325">Glycoprotein</keyword>
<keyword id="KW-0326">Glycosidase</keyword>
<keyword id="KW-1032">Host cell membrane</keyword>
<keyword id="KW-1043">Host membrane</keyword>
<keyword id="KW-0378">Hydrolase</keyword>
<keyword id="KW-0472">Membrane</keyword>
<keyword id="KW-0479">Metal-binding</keyword>
<keyword id="KW-0735">Signal-anchor</keyword>
<keyword id="KW-0812">Transmembrane</keyword>
<keyword id="KW-1133">Transmembrane helix</keyword>
<keyword id="KW-0946">Virion</keyword>